<feature type="chain" id="PRO_0000049726" description="Uncharacterized protein YpuA">
    <location>
        <begin position="1"/>
        <end position="290"/>
    </location>
</feature>
<organism>
    <name type="scientific">Bacillus subtilis (strain 168)</name>
    <dbReference type="NCBI Taxonomy" id="224308"/>
    <lineage>
        <taxon>Bacteria</taxon>
        <taxon>Bacillati</taxon>
        <taxon>Bacillota</taxon>
        <taxon>Bacilli</taxon>
        <taxon>Bacillales</taxon>
        <taxon>Bacillaceae</taxon>
        <taxon>Bacillus</taxon>
    </lineage>
</organism>
<gene>
    <name type="primary">ypuA</name>
    <name type="ordered locus">BSU23370</name>
</gene>
<proteinExistence type="evidence at protein level"/>
<reference key="1">
    <citation type="journal article" date="1993" name="Mol. Microbiol.">
        <title>The organization of the Bacillus subtilis 168 chromosome region between the spoVA and serA genetic loci, based on sequence data.</title>
        <authorList>
            <person name="Sorokin A.V."/>
            <person name="Zumstein E."/>
            <person name="Azevedo V."/>
            <person name="Ehrlich S.D."/>
            <person name="Serror P."/>
        </authorList>
    </citation>
    <scope>NUCLEOTIDE SEQUENCE [GENOMIC DNA]</scope>
    <source>
        <strain>168 / Marburg / ATCC 6051 / DSM 10 / JCM 1465 / NBRC 13719 / NCIMB 3610 / NRRL NRS-744 / VKM B-501</strain>
    </source>
</reference>
<reference key="2">
    <citation type="journal article" date="1997" name="Nature">
        <title>The complete genome sequence of the Gram-positive bacterium Bacillus subtilis.</title>
        <authorList>
            <person name="Kunst F."/>
            <person name="Ogasawara N."/>
            <person name="Moszer I."/>
            <person name="Albertini A.M."/>
            <person name="Alloni G."/>
            <person name="Azevedo V."/>
            <person name="Bertero M.G."/>
            <person name="Bessieres P."/>
            <person name="Bolotin A."/>
            <person name="Borchert S."/>
            <person name="Borriss R."/>
            <person name="Boursier L."/>
            <person name="Brans A."/>
            <person name="Braun M."/>
            <person name="Brignell S.C."/>
            <person name="Bron S."/>
            <person name="Brouillet S."/>
            <person name="Bruschi C.V."/>
            <person name="Caldwell B."/>
            <person name="Capuano V."/>
            <person name="Carter N.M."/>
            <person name="Choi S.-K."/>
            <person name="Codani J.-J."/>
            <person name="Connerton I.F."/>
            <person name="Cummings N.J."/>
            <person name="Daniel R.A."/>
            <person name="Denizot F."/>
            <person name="Devine K.M."/>
            <person name="Duesterhoeft A."/>
            <person name="Ehrlich S.D."/>
            <person name="Emmerson P.T."/>
            <person name="Entian K.-D."/>
            <person name="Errington J."/>
            <person name="Fabret C."/>
            <person name="Ferrari E."/>
            <person name="Foulger D."/>
            <person name="Fritz C."/>
            <person name="Fujita M."/>
            <person name="Fujita Y."/>
            <person name="Fuma S."/>
            <person name="Galizzi A."/>
            <person name="Galleron N."/>
            <person name="Ghim S.-Y."/>
            <person name="Glaser P."/>
            <person name="Goffeau A."/>
            <person name="Golightly E.J."/>
            <person name="Grandi G."/>
            <person name="Guiseppi G."/>
            <person name="Guy B.J."/>
            <person name="Haga K."/>
            <person name="Haiech J."/>
            <person name="Harwood C.R."/>
            <person name="Henaut A."/>
            <person name="Hilbert H."/>
            <person name="Holsappel S."/>
            <person name="Hosono S."/>
            <person name="Hullo M.-F."/>
            <person name="Itaya M."/>
            <person name="Jones L.-M."/>
            <person name="Joris B."/>
            <person name="Karamata D."/>
            <person name="Kasahara Y."/>
            <person name="Klaerr-Blanchard M."/>
            <person name="Klein C."/>
            <person name="Kobayashi Y."/>
            <person name="Koetter P."/>
            <person name="Koningstein G."/>
            <person name="Krogh S."/>
            <person name="Kumano M."/>
            <person name="Kurita K."/>
            <person name="Lapidus A."/>
            <person name="Lardinois S."/>
            <person name="Lauber J."/>
            <person name="Lazarevic V."/>
            <person name="Lee S.-M."/>
            <person name="Levine A."/>
            <person name="Liu H."/>
            <person name="Masuda S."/>
            <person name="Mauel C."/>
            <person name="Medigue C."/>
            <person name="Medina N."/>
            <person name="Mellado R.P."/>
            <person name="Mizuno M."/>
            <person name="Moestl D."/>
            <person name="Nakai S."/>
            <person name="Noback M."/>
            <person name="Noone D."/>
            <person name="O'Reilly M."/>
            <person name="Ogawa K."/>
            <person name="Ogiwara A."/>
            <person name="Oudega B."/>
            <person name="Park S.-H."/>
            <person name="Parro V."/>
            <person name="Pohl T.M."/>
            <person name="Portetelle D."/>
            <person name="Porwollik S."/>
            <person name="Prescott A.M."/>
            <person name="Presecan E."/>
            <person name="Pujic P."/>
            <person name="Purnelle B."/>
            <person name="Rapoport G."/>
            <person name="Rey M."/>
            <person name="Reynolds S."/>
            <person name="Rieger M."/>
            <person name="Rivolta C."/>
            <person name="Rocha E."/>
            <person name="Roche B."/>
            <person name="Rose M."/>
            <person name="Sadaie Y."/>
            <person name="Sato T."/>
            <person name="Scanlan E."/>
            <person name="Schleich S."/>
            <person name="Schroeter R."/>
            <person name="Scoffone F."/>
            <person name="Sekiguchi J."/>
            <person name="Sekowska A."/>
            <person name="Seror S.J."/>
            <person name="Serror P."/>
            <person name="Shin B.-S."/>
            <person name="Soldo B."/>
            <person name="Sorokin A."/>
            <person name="Tacconi E."/>
            <person name="Takagi T."/>
            <person name="Takahashi H."/>
            <person name="Takemaru K."/>
            <person name="Takeuchi M."/>
            <person name="Tamakoshi A."/>
            <person name="Tanaka T."/>
            <person name="Terpstra P."/>
            <person name="Tognoni A."/>
            <person name="Tosato V."/>
            <person name="Uchiyama S."/>
            <person name="Vandenbol M."/>
            <person name="Vannier F."/>
            <person name="Vassarotti A."/>
            <person name="Viari A."/>
            <person name="Wambutt R."/>
            <person name="Wedler E."/>
            <person name="Wedler H."/>
            <person name="Weitzenegger T."/>
            <person name="Winters P."/>
            <person name="Wipat A."/>
            <person name="Yamamoto H."/>
            <person name="Yamane K."/>
            <person name="Yasumoto K."/>
            <person name="Yata K."/>
            <person name="Yoshida K."/>
            <person name="Yoshikawa H.-F."/>
            <person name="Zumstein E."/>
            <person name="Yoshikawa H."/>
            <person name="Danchin A."/>
        </authorList>
    </citation>
    <scope>NUCLEOTIDE SEQUENCE [LARGE SCALE GENOMIC DNA]</scope>
    <source>
        <strain>168</strain>
    </source>
</reference>
<reference key="3">
    <citation type="journal article" date="1991" name="Agric. Biol. Chem.">
        <title>Molecular cloning and analysis of nucleotide sequence of the Bacillus subtilis lysA gene region using B. subtilis phage vectors and a multi-copy plasmid, pUB110.</title>
        <authorList>
            <person name="Yamamoto J."/>
            <person name="Shimizu M."/>
            <person name="Yamane K."/>
        </authorList>
    </citation>
    <scope>NUCLEOTIDE SEQUENCE [GENOMIC DNA] OF 113-290</scope>
</reference>
<reference key="4">
    <citation type="journal article" date="1994" name="Mol. Microbiol.">
        <title>Cloning and characterization of ppiB, a Bacillus subtilis gene which encodes a cyclosporin A-sensitive peptidyl-prolyl cis-trans isomerase.</title>
        <authorList>
            <person name="Herrler M."/>
            <person name="Bang H."/>
            <person name="Marahiel M.A."/>
        </authorList>
    </citation>
    <scope>NUCLEOTIDE SEQUENCE [GENOMIC DNA] OF 113-290</scope>
    <source>
        <strain>168 / JH642</strain>
    </source>
</reference>
<reference key="5">
    <citation type="journal article" date="2007" name="J. Bacteriol.">
        <title>SigM-responsive genes of Bacillus subtilis and their promoters.</title>
        <authorList>
            <person name="Jervis A.J."/>
            <person name="Thackray P.D."/>
            <person name="Houston C.W."/>
            <person name="Horsburgh M.J."/>
            <person name="Moir A."/>
        </authorList>
    </citation>
    <scope>INDUCTION</scope>
    <source>
        <strain>168 / 1604</strain>
    </source>
</reference>
<reference key="6">
    <citation type="journal article" date="2012" name="Mol. Microbiol.">
        <title>The biofilm formation defect of a Bacillus subtilis flotillin-defective mutant involves the protease FtsH.</title>
        <authorList>
            <person name="Yepes A."/>
            <person name="Schneider J."/>
            <person name="Mielich B."/>
            <person name="Koch G."/>
            <person name="Garcia-Betancur J.C."/>
            <person name="Ramamurthi K.S."/>
            <person name="Vlamakis H."/>
            <person name="Lopez D."/>
        </authorList>
    </citation>
    <scope>IDENTIFICATION BY MASS SPECTROMETRY</scope>
    <scope>SUBCELLULAR LOCATION</scope>
    <source>
        <strain>168 / Marburg / ATCC 6051 / DSM 10 / JCM 1465 / NBRC 13719 / NCIMB 3610 / NRRL NRS-744 / VKM B-501</strain>
    </source>
</reference>
<protein>
    <recommendedName>
        <fullName>Uncharacterized protein YpuA</fullName>
    </recommendedName>
    <alternativeName>
        <fullName>ORFX19</fullName>
    </alternativeName>
</protein>
<keyword id="KW-1003">Cell membrane</keyword>
<keyword id="KW-0472">Membrane</keyword>
<keyword id="KW-1185">Reference proteome</keyword>
<comment type="subcellular location">
    <subcellularLocation>
        <location evidence="2">Cell membrane</location>
    </subcellularLocation>
    <subcellularLocation>
        <location evidence="2">Membrane raft</location>
    </subcellularLocation>
    <text evidence="2">Present in detergent-resistant membrane (DRM) fractions that may be equivalent to eukaryotic membrane rafts; these rafts include proteins involved in signaling, molecule trafficking and protein secretion.</text>
</comment>
<comment type="induction">
    <text evidence="1">Transcribed under partial control of SigM ECF sigma factor (PubMed:17434969).</text>
</comment>
<accession>P31847</accession>
<accession>P37951</accession>
<sequence>MKKIWIGMLAAAVLLLMVPKVSLADAAVGDVIVTLGADLSESDKQKVLDEMNVPDNATTVTVTNKEEHEYLGKYISNAQIGSRAISSSSITIAKKGSGLNVETHNISGITDEMYLNALMTAGVKDAKVYVTAPFEVSGTAALTGLIKAYEVSSDEAISEDVKQVANQELVTTSELGDKIGNENAAALIAKIKEEFAKNGVPDNKADIEKQVDDAASDLNVTLTDSQKNQLVSLFNKMKNADIDWGQVSDQLDKAKDKITKFIESDEGKNFIQKVIDFFVSIWNAIVSIFK</sequence>
<evidence type="ECO:0000269" key="1">
    <source>
    </source>
</evidence>
<evidence type="ECO:0000269" key="2">
    <source>
    </source>
</evidence>
<dbReference type="EMBL" id="L09228">
    <property type="protein sequence ID" value="AAA67474.1"/>
    <property type="molecule type" value="Genomic_DNA"/>
</dbReference>
<dbReference type="EMBL" id="AL009126">
    <property type="protein sequence ID" value="CAB14269.1"/>
    <property type="molecule type" value="Genomic_DNA"/>
</dbReference>
<dbReference type="EMBL" id="D90189">
    <property type="protein sequence ID" value="BAA14212.1"/>
    <property type="molecule type" value="Genomic_DNA"/>
</dbReference>
<dbReference type="EMBL" id="X73898">
    <property type="protein sequence ID" value="CAA52102.1"/>
    <property type="molecule type" value="Genomic_DNA"/>
</dbReference>
<dbReference type="PIR" id="S45536">
    <property type="entry name" value="JU0473"/>
</dbReference>
<dbReference type="RefSeq" id="NP_390218.1">
    <property type="nucleotide sequence ID" value="NC_000964.3"/>
</dbReference>
<dbReference type="RefSeq" id="WP_009967658.1">
    <property type="nucleotide sequence ID" value="NZ_OZ025638.1"/>
</dbReference>
<dbReference type="SMR" id="P31847"/>
<dbReference type="FunCoup" id="P31847">
    <property type="interactions" value="25"/>
</dbReference>
<dbReference type="STRING" id="224308.BSU23370"/>
<dbReference type="PaxDb" id="224308-BSU23370"/>
<dbReference type="DNASU" id="938939"/>
<dbReference type="EnsemblBacteria" id="CAB14269">
    <property type="protein sequence ID" value="CAB14269"/>
    <property type="gene ID" value="BSU_23370"/>
</dbReference>
<dbReference type="GeneID" id="938939"/>
<dbReference type="KEGG" id="bsu:BSU23370"/>
<dbReference type="PATRIC" id="fig|224308.179.peg.2546"/>
<dbReference type="eggNOG" id="COG4086">
    <property type="taxonomic scope" value="Bacteria"/>
</dbReference>
<dbReference type="InParanoid" id="P31847"/>
<dbReference type="OrthoDB" id="9810153at2"/>
<dbReference type="PhylomeDB" id="P31847"/>
<dbReference type="BioCyc" id="BSUB:BSU23370-MONOMER"/>
<dbReference type="Proteomes" id="UP000001570">
    <property type="component" value="Chromosome"/>
</dbReference>
<dbReference type="GO" id="GO:0045121">
    <property type="term" value="C:membrane raft"/>
    <property type="evidence" value="ECO:0007669"/>
    <property type="project" value="UniProtKB-SubCell"/>
</dbReference>
<dbReference type="GO" id="GO:0005886">
    <property type="term" value="C:plasma membrane"/>
    <property type="evidence" value="ECO:0007669"/>
    <property type="project" value="UniProtKB-SubCell"/>
</dbReference>
<dbReference type="InterPro" id="IPR009343">
    <property type="entry name" value="DUF1002"/>
</dbReference>
<dbReference type="Pfam" id="PF06207">
    <property type="entry name" value="DUF1002"/>
    <property type="match status" value="1"/>
</dbReference>
<name>YPUA_BACSU</name>